<gene>
    <name type="primary">PG1</name>
</gene>
<comment type="catalytic activity">
    <reaction>
        <text>(1,4-alpha-D-galacturonosyl)n+m + H2O = (1,4-alpha-D-galacturonosyl)n + (1,4-alpha-D-galacturonosyl)m.</text>
        <dbReference type="EC" id="3.2.1.15"/>
    </reaction>
</comment>
<comment type="subcellular location">
    <subcellularLocation>
        <location evidence="5">Secreted</location>
    </subcellularLocation>
</comment>
<comment type="similarity">
    <text evidence="5">Belongs to the glycosyl hydrolase 28 family.</text>
</comment>
<keyword id="KW-0961">Cell wall biogenesis/degradation</keyword>
<keyword id="KW-0165">Cleavage on pair of basic residues</keyword>
<keyword id="KW-1015">Disulfide bond</keyword>
<keyword id="KW-0325">Glycoprotein</keyword>
<keyword id="KW-0326">Glycosidase</keyword>
<keyword id="KW-0378">Hydrolase</keyword>
<keyword id="KW-0677">Repeat</keyword>
<keyword id="KW-0964">Secreted</keyword>
<keyword id="KW-0732">Signal</keyword>
<keyword id="KW-0865">Zymogen</keyword>
<evidence type="ECO:0000250" key="1">
    <source>
        <dbReference type="UniProtKB" id="O74213"/>
    </source>
</evidence>
<evidence type="ECO:0000255" key="2"/>
<evidence type="ECO:0000255" key="3">
    <source>
        <dbReference type="PROSITE-ProRule" id="PRU00498"/>
    </source>
</evidence>
<evidence type="ECO:0000255" key="4">
    <source>
        <dbReference type="PROSITE-ProRule" id="PRU10052"/>
    </source>
</evidence>
<evidence type="ECO:0000305" key="5"/>
<accession>Q12708</accession>
<name>PGLR1_SCLSC</name>
<dbReference type="EC" id="3.2.1.15"/>
<dbReference type="EMBL" id="L12023">
    <property type="protein sequence ID" value="AAC14466.1"/>
    <property type="molecule type" value="Genomic_DNA"/>
</dbReference>
<dbReference type="SMR" id="Q12708"/>
<dbReference type="CAZy" id="GH28">
    <property type="family name" value="Glycoside Hydrolase Family 28"/>
</dbReference>
<dbReference type="GlyCosmos" id="Q12708">
    <property type="glycosylation" value="1 site, No reported glycans"/>
</dbReference>
<dbReference type="ABCD" id="Q12708">
    <property type="antibodies" value="2 sequenced antibodies"/>
</dbReference>
<dbReference type="VEuPathDB" id="FungiDB:sscle_16g108170"/>
<dbReference type="BRENDA" id="3.2.1.15">
    <property type="organism ID" value="5625"/>
</dbReference>
<dbReference type="PHI-base" id="PHI:123118"/>
<dbReference type="GO" id="GO:0005576">
    <property type="term" value="C:extracellular region"/>
    <property type="evidence" value="ECO:0007669"/>
    <property type="project" value="UniProtKB-SubCell"/>
</dbReference>
<dbReference type="GO" id="GO:0004650">
    <property type="term" value="F:polygalacturonase activity"/>
    <property type="evidence" value="ECO:0007669"/>
    <property type="project" value="UniProtKB-EC"/>
</dbReference>
<dbReference type="GO" id="GO:0071555">
    <property type="term" value="P:cell wall organization"/>
    <property type="evidence" value="ECO:0007669"/>
    <property type="project" value="UniProtKB-KW"/>
</dbReference>
<dbReference type="GO" id="GO:0045490">
    <property type="term" value="P:pectin catabolic process"/>
    <property type="evidence" value="ECO:0007669"/>
    <property type="project" value="UniProtKB-ARBA"/>
</dbReference>
<dbReference type="FunFam" id="2.160.20.10:FF:000002">
    <property type="entry name" value="Endopolygalacturonase D"/>
    <property type="match status" value="1"/>
</dbReference>
<dbReference type="Gene3D" id="2.160.20.10">
    <property type="entry name" value="Single-stranded right-handed beta-helix, Pectin lyase-like"/>
    <property type="match status" value="1"/>
</dbReference>
<dbReference type="InterPro" id="IPR000743">
    <property type="entry name" value="Glyco_hydro_28"/>
</dbReference>
<dbReference type="InterPro" id="IPR050434">
    <property type="entry name" value="Glycosyl_hydrlase_28"/>
</dbReference>
<dbReference type="InterPro" id="IPR006626">
    <property type="entry name" value="PbH1"/>
</dbReference>
<dbReference type="InterPro" id="IPR012334">
    <property type="entry name" value="Pectin_lyas_fold"/>
</dbReference>
<dbReference type="InterPro" id="IPR011050">
    <property type="entry name" value="Pectin_lyase_fold/virulence"/>
</dbReference>
<dbReference type="PANTHER" id="PTHR31884">
    <property type="entry name" value="POLYGALACTURONASE"/>
    <property type="match status" value="1"/>
</dbReference>
<dbReference type="PANTHER" id="PTHR31884:SF1">
    <property type="entry name" value="POLYGALACTURONASE"/>
    <property type="match status" value="1"/>
</dbReference>
<dbReference type="Pfam" id="PF00295">
    <property type="entry name" value="Glyco_hydro_28"/>
    <property type="match status" value="1"/>
</dbReference>
<dbReference type="SMART" id="SM00710">
    <property type="entry name" value="PbH1"/>
    <property type="match status" value="6"/>
</dbReference>
<dbReference type="SUPFAM" id="SSF51126">
    <property type="entry name" value="Pectin lyase-like"/>
    <property type="match status" value="1"/>
</dbReference>
<dbReference type="PROSITE" id="PS00502">
    <property type="entry name" value="POLYGALACTURONASE"/>
    <property type="match status" value="1"/>
</dbReference>
<organism>
    <name type="scientific">Sclerotinia sclerotiorum</name>
    <name type="common">White mold</name>
    <name type="synonym">Whetzelinia sclerotiorum</name>
    <dbReference type="NCBI Taxonomy" id="5180"/>
    <lineage>
        <taxon>Eukaryota</taxon>
        <taxon>Fungi</taxon>
        <taxon>Dikarya</taxon>
        <taxon>Ascomycota</taxon>
        <taxon>Pezizomycotina</taxon>
        <taxon>Leotiomycetes</taxon>
        <taxon>Helotiales</taxon>
        <taxon>Sclerotiniaceae</taxon>
        <taxon>Sclerotinia</taxon>
    </lineage>
</organism>
<sequence>MVHILSSALSLLRLGAAVSAAPAPAPTAAPNVADALAAVEKRAGSCTFSDPAVPLPAIKSKASCATIVISAVAVPSGTTLDLTGLKSGTHVVFEGTTTFGYEEWSGPLVSVSGTDITVTGASGSVLDGNGAKYWDGKGTNGGKTKPKFFYAHSLKGKSSINNVKILNSPVQVFSINSASGLTLSGITIDNSAGNSLGHNTDAFDVGSSTDITISGANVQNQDDCLAINSGTGITFTGGTCSGGHGLSIGSVGGRSDNVVSDVIIESSTVKNSANGVRIKTVLGATGSVSGVTYKDITLSGITSYGVVIEQDYENGSPTGKPTSGVPITGVTLSNVHGTVSSSATNVYVLCAKCSGWTWDVNVTGGKTSTKCAGLPSGVKC</sequence>
<reference key="1">
    <citation type="journal article" date="1994" name="Gene">
        <title>Cloning and sequence analysis of a polygalacturonase-encoding gene from the phytopathogenic fungus Sclerotinia sclerotiorum.</title>
        <authorList>
            <person name="Reymond P."/>
            <person name="Deleage G."/>
            <person name="Rascle C."/>
            <person name="Fevre M."/>
        </authorList>
    </citation>
    <scope>NUCLEOTIDE SEQUENCE [GENOMIC DNA]</scope>
    <source>
        <strain>SS5</strain>
    </source>
</reference>
<proteinExistence type="inferred from homology"/>
<protein>
    <recommendedName>
        <fullName>Endo-polygalacturonase</fullName>
        <shortName>PG</shortName>
        <ecNumber>3.2.1.15</ecNumber>
    </recommendedName>
    <alternativeName>
        <fullName>Pectinase</fullName>
    </alternativeName>
</protein>
<feature type="signal peptide" evidence="2">
    <location>
        <begin position="1"/>
        <end position="17"/>
    </location>
</feature>
<feature type="propeptide" id="PRO_0000024795" evidence="2">
    <location>
        <begin position="18"/>
        <end position="42"/>
    </location>
</feature>
<feature type="chain" id="PRO_0000024796" description="Endo-polygalacturonase">
    <location>
        <begin position="43"/>
        <end position="380"/>
    </location>
</feature>
<feature type="repeat" description="PbH1 1" evidence="2">
    <location>
        <begin position="178"/>
        <end position="207"/>
    </location>
</feature>
<feature type="repeat" description="PbH1 2" evidence="2">
    <location>
        <begin position="208"/>
        <end position="229"/>
    </location>
</feature>
<feature type="repeat" description="PbH1 3" evidence="2">
    <location>
        <begin position="230"/>
        <end position="250"/>
    </location>
</feature>
<feature type="repeat" description="PbH1 4" evidence="2">
    <location>
        <begin position="259"/>
        <end position="280"/>
    </location>
</feature>
<feature type="repeat" description="PbH1 5" evidence="2">
    <location>
        <begin position="288"/>
        <end position="310"/>
    </location>
</feature>
<feature type="repeat" description="PbH1 6" evidence="2">
    <location>
        <begin position="322"/>
        <end position="343"/>
    </location>
</feature>
<feature type="active site" description="Proton donor" evidence="1">
    <location>
        <position position="222"/>
    </location>
</feature>
<feature type="active site" evidence="4">
    <location>
        <position position="244"/>
    </location>
</feature>
<feature type="glycosylation site" description="N-linked (GlcNAc...) asparagine" evidence="3">
    <location>
        <position position="361"/>
    </location>
</feature>
<feature type="disulfide bond" evidence="1">
    <location>
        <begin position="46"/>
        <end position="64"/>
    </location>
</feature>
<feature type="disulfide bond" evidence="1">
    <location>
        <begin position="224"/>
        <end position="240"/>
    </location>
</feature>
<feature type="disulfide bond" evidence="1">
    <location>
        <begin position="350"/>
        <end position="353"/>
    </location>
</feature>
<feature type="disulfide bond" evidence="1">
    <location>
        <begin position="371"/>
        <end position="380"/>
    </location>
</feature>